<proteinExistence type="evidence at protein level"/>
<keyword id="KW-0002">3D-structure</keyword>
<keyword id="KW-0119">Carbohydrate metabolism</keyword>
<keyword id="KW-0378">Hydrolase</keyword>
<keyword id="KW-1185">Reference proteome</keyword>
<keyword id="KW-0677">Repeat</keyword>
<name>FRLB_BACSU</name>
<reference key="1">
    <citation type="journal article" date="1997" name="Nature">
        <title>The complete genome sequence of the Gram-positive bacterium Bacillus subtilis.</title>
        <authorList>
            <person name="Kunst F."/>
            <person name="Ogasawara N."/>
            <person name="Moszer I."/>
            <person name="Albertini A.M."/>
            <person name="Alloni G."/>
            <person name="Azevedo V."/>
            <person name="Bertero M.G."/>
            <person name="Bessieres P."/>
            <person name="Bolotin A."/>
            <person name="Borchert S."/>
            <person name="Borriss R."/>
            <person name="Boursier L."/>
            <person name="Brans A."/>
            <person name="Braun M."/>
            <person name="Brignell S.C."/>
            <person name="Bron S."/>
            <person name="Brouillet S."/>
            <person name="Bruschi C.V."/>
            <person name="Caldwell B."/>
            <person name="Capuano V."/>
            <person name="Carter N.M."/>
            <person name="Choi S.-K."/>
            <person name="Codani J.-J."/>
            <person name="Connerton I.F."/>
            <person name="Cummings N.J."/>
            <person name="Daniel R.A."/>
            <person name="Denizot F."/>
            <person name="Devine K.M."/>
            <person name="Duesterhoeft A."/>
            <person name="Ehrlich S.D."/>
            <person name="Emmerson P.T."/>
            <person name="Entian K.-D."/>
            <person name="Errington J."/>
            <person name="Fabret C."/>
            <person name="Ferrari E."/>
            <person name="Foulger D."/>
            <person name="Fritz C."/>
            <person name="Fujita M."/>
            <person name="Fujita Y."/>
            <person name="Fuma S."/>
            <person name="Galizzi A."/>
            <person name="Galleron N."/>
            <person name="Ghim S.-Y."/>
            <person name="Glaser P."/>
            <person name="Goffeau A."/>
            <person name="Golightly E.J."/>
            <person name="Grandi G."/>
            <person name="Guiseppi G."/>
            <person name="Guy B.J."/>
            <person name="Haga K."/>
            <person name="Haiech J."/>
            <person name="Harwood C.R."/>
            <person name="Henaut A."/>
            <person name="Hilbert H."/>
            <person name="Holsappel S."/>
            <person name="Hosono S."/>
            <person name="Hullo M.-F."/>
            <person name="Itaya M."/>
            <person name="Jones L.-M."/>
            <person name="Joris B."/>
            <person name="Karamata D."/>
            <person name="Kasahara Y."/>
            <person name="Klaerr-Blanchard M."/>
            <person name="Klein C."/>
            <person name="Kobayashi Y."/>
            <person name="Koetter P."/>
            <person name="Koningstein G."/>
            <person name="Krogh S."/>
            <person name="Kumano M."/>
            <person name="Kurita K."/>
            <person name="Lapidus A."/>
            <person name="Lardinois S."/>
            <person name="Lauber J."/>
            <person name="Lazarevic V."/>
            <person name="Lee S.-M."/>
            <person name="Levine A."/>
            <person name="Liu H."/>
            <person name="Masuda S."/>
            <person name="Mauel C."/>
            <person name="Medigue C."/>
            <person name="Medina N."/>
            <person name="Mellado R.P."/>
            <person name="Mizuno M."/>
            <person name="Moestl D."/>
            <person name="Nakai S."/>
            <person name="Noback M."/>
            <person name="Noone D."/>
            <person name="O'Reilly M."/>
            <person name="Ogawa K."/>
            <person name="Ogiwara A."/>
            <person name="Oudega B."/>
            <person name="Park S.-H."/>
            <person name="Parro V."/>
            <person name="Pohl T.M."/>
            <person name="Portetelle D."/>
            <person name="Porwollik S."/>
            <person name="Prescott A.M."/>
            <person name="Presecan E."/>
            <person name="Pujic P."/>
            <person name="Purnelle B."/>
            <person name="Rapoport G."/>
            <person name="Rey M."/>
            <person name="Reynolds S."/>
            <person name="Rieger M."/>
            <person name="Rivolta C."/>
            <person name="Rocha E."/>
            <person name="Roche B."/>
            <person name="Rose M."/>
            <person name="Sadaie Y."/>
            <person name="Sato T."/>
            <person name="Scanlan E."/>
            <person name="Schleich S."/>
            <person name="Schroeter R."/>
            <person name="Scoffone F."/>
            <person name="Sekiguchi J."/>
            <person name="Sekowska A."/>
            <person name="Seror S.J."/>
            <person name="Serror P."/>
            <person name="Shin B.-S."/>
            <person name="Soldo B."/>
            <person name="Sorokin A."/>
            <person name="Tacconi E."/>
            <person name="Takagi T."/>
            <person name="Takahashi H."/>
            <person name="Takemaru K."/>
            <person name="Takeuchi M."/>
            <person name="Tamakoshi A."/>
            <person name="Tanaka T."/>
            <person name="Terpstra P."/>
            <person name="Tognoni A."/>
            <person name="Tosato V."/>
            <person name="Uchiyama S."/>
            <person name="Vandenbol M."/>
            <person name="Vannier F."/>
            <person name="Vassarotti A."/>
            <person name="Viari A."/>
            <person name="Wambutt R."/>
            <person name="Wedler E."/>
            <person name="Wedler H."/>
            <person name="Weitzenegger T."/>
            <person name="Winters P."/>
            <person name="Wipat A."/>
            <person name="Yamamoto H."/>
            <person name="Yamane K."/>
            <person name="Yasumoto K."/>
            <person name="Yata K."/>
            <person name="Yoshida K."/>
            <person name="Yoshikawa H.-F."/>
            <person name="Zumstein E."/>
            <person name="Yoshikawa H."/>
            <person name="Danchin A."/>
        </authorList>
    </citation>
    <scope>NUCLEOTIDE SEQUENCE [LARGE SCALE GENOMIC DNA]</scope>
    <source>
        <strain>168</strain>
    </source>
</reference>
<reference key="2">
    <citation type="journal article" date="2004" name="FEBS Lett.">
        <title>Identification of enzymes acting on alpha-glycated amino acids in Bacillus subtilis.</title>
        <authorList>
            <person name="Wiame E."/>
            <person name="Duquenne A."/>
            <person name="Delpierre G."/>
            <person name="Van Schaftingen E."/>
        </authorList>
    </citation>
    <scope>FUNCTION</scope>
    <scope>SUBSTRATE SPECIFICITY</scope>
    <scope>BIOPHYSICOCHEMICAL PROPERTIES</scope>
</reference>
<reference key="3">
    <citation type="submission" date="2009-02" db="PDB data bank">
        <title>Crystal structure of yurP protein (np_391141.1) from Bacillus subtilis at 1.90 a resolution.</title>
        <authorList>
            <consortium name="Joint center for structural genomics (JCSG)"/>
        </authorList>
    </citation>
    <scope>X-RAY CRYSTALLOGRAPHY (1.9 ANGSTROMS)</scope>
    <scope>SUBUNIT</scope>
</reference>
<sequence length="328" mass="36876">MSQATAKVNREVQAFLQDLKGKTIDHVFFVACGGSSAIMYPSKYVFDRESKSINSDLYSANEFIQRNPVQLGEKSLVILCSHSGNTPETVKAAAFARGKGALTIAMTFKPESPLAQEAQYVAQYDWGDEALAINTNYGVLYQIVFGTLQVLENNTKFEQAIEGLDQLQAVYEKALKQEADNAKQFAKAHEKESIIYTMASGANYGVAYSYSICILMEMQWIHSHAIHAGEYFHGPFEIIDESVPFIILLGLDETRPLEERALTFSKKYGKKLTVLDAASYDFTAIDDSVKGYLAPLVLNRVLRSYADELAEERNHPLSHRRYMWKVEY</sequence>
<accession>O32157</accession>
<comment type="function">
    <text evidence="2">Catalyzes the conversion of a range of fructosamine 6-phosphates to glucose 6-phosphate and a free amino acid.</text>
</comment>
<comment type="biophysicochemical properties">
    <kinetics>
        <KM evidence="2">0.05 mM for fructosevaline-6-phosphate (at 30 degrees Celsius and pH 7.1)</KM>
        <KM evidence="2">0.16 mM for fructoseglycine-6-phosphate (at 30 degrees Celsius and pH 7.1)</KM>
        <KM evidence="2">1.2 mM for fructoselysine-6-phosphate (at 30 degrees Celsius and pH 7.1)</KM>
        <Vmax evidence="2">0.01 umol/min/mg enzyme with fructoselysine-6-phosphate as substrate (at 30 degrees Celsius and pH 7.1)</Vmax>
        <Vmax evidence="2">0.1 umol/min/mg enzyme with fructoseglycine-6-phosphate as substrate (at 30 degrees Celsius and pH 7.1)</Vmax>
        <Vmax evidence="2">0.5 umol/min/mg enzyme with fructosevaline-6-phosphate as substrate (at 30 degrees Celsius and pH 7.1)</Vmax>
    </kinetics>
</comment>
<comment type="subunit">
    <text evidence="3">Homooctamer.</text>
</comment>
<gene>
    <name type="primary">frlB</name>
    <name type="synonym">yurP</name>
    <name type="ordered locus">BSU32610</name>
</gene>
<evidence type="ECO:0000255" key="1">
    <source>
        <dbReference type="PROSITE-ProRule" id="PRU00797"/>
    </source>
</evidence>
<evidence type="ECO:0000269" key="2">
    <source>
    </source>
</evidence>
<evidence type="ECO:0000269" key="3">
    <source ref="3"/>
</evidence>
<evidence type="ECO:0007829" key="4">
    <source>
        <dbReference type="PDB" id="3EUA"/>
    </source>
</evidence>
<organism>
    <name type="scientific">Bacillus subtilis (strain 168)</name>
    <dbReference type="NCBI Taxonomy" id="224308"/>
    <lineage>
        <taxon>Bacteria</taxon>
        <taxon>Bacillati</taxon>
        <taxon>Bacillota</taxon>
        <taxon>Bacilli</taxon>
        <taxon>Bacillales</taxon>
        <taxon>Bacillaceae</taxon>
        <taxon>Bacillus</taxon>
    </lineage>
</organism>
<protein>
    <recommendedName>
        <fullName>Fructosamine deglycase FrlB</fullName>
        <ecNumber>3.5.-.-</ecNumber>
    </recommendedName>
</protein>
<feature type="chain" id="PRO_0000387992" description="Fructosamine deglycase FrlB">
    <location>
        <begin position="1"/>
        <end position="328"/>
    </location>
</feature>
<feature type="domain" description="SIS 1" evidence="1">
    <location>
        <begin position="15"/>
        <end position="153"/>
    </location>
</feature>
<feature type="domain" description="SIS 2" evidence="1">
    <location>
        <begin position="181"/>
        <end position="311"/>
    </location>
</feature>
<feature type="helix" evidence="4">
    <location>
        <begin position="5"/>
        <end position="7"/>
    </location>
</feature>
<feature type="helix" evidence="4">
    <location>
        <begin position="10"/>
        <end position="19"/>
    </location>
</feature>
<feature type="strand" evidence="4">
    <location>
        <begin position="26"/>
        <end position="31"/>
    </location>
</feature>
<feature type="helix" evidence="4">
    <location>
        <begin position="34"/>
        <end position="37"/>
    </location>
</feature>
<feature type="helix" evidence="4">
    <location>
        <begin position="40"/>
        <end position="49"/>
    </location>
</feature>
<feature type="strand" evidence="4">
    <location>
        <begin position="54"/>
        <end position="59"/>
    </location>
</feature>
<feature type="helix" evidence="4">
    <location>
        <begin position="60"/>
        <end position="66"/>
    </location>
</feature>
<feature type="strand" evidence="4">
    <location>
        <begin position="75"/>
        <end position="84"/>
    </location>
</feature>
<feature type="helix" evidence="4">
    <location>
        <begin position="87"/>
        <end position="98"/>
    </location>
</feature>
<feature type="strand" evidence="4">
    <location>
        <begin position="102"/>
        <end position="108"/>
    </location>
</feature>
<feature type="helix" evidence="4">
    <location>
        <begin position="113"/>
        <end position="117"/>
    </location>
</feature>
<feature type="strand" evidence="4">
    <location>
        <begin position="118"/>
        <end position="123"/>
    </location>
</feature>
<feature type="helix" evidence="4">
    <location>
        <begin position="132"/>
        <end position="134"/>
    </location>
</feature>
<feature type="helix" evidence="4">
    <location>
        <begin position="136"/>
        <end position="152"/>
    </location>
</feature>
<feature type="helix" evidence="4">
    <location>
        <begin position="157"/>
        <end position="189"/>
    </location>
</feature>
<feature type="strand" evidence="4">
    <location>
        <begin position="196"/>
        <end position="199"/>
    </location>
</feature>
<feature type="helix" evidence="4">
    <location>
        <begin position="201"/>
        <end position="203"/>
    </location>
</feature>
<feature type="helix" evidence="4">
    <location>
        <begin position="204"/>
        <end position="212"/>
    </location>
</feature>
<feature type="turn" evidence="4">
    <location>
        <begin position="213"/>
        <end position="215"/>
    </location>
</feature>
<feature type="helix" evidence="4">
    <location>
        <begin position="216"/>
        <end position="219"/>
    </location>
</feature>
<feature type="strand" evidence="4">
    <location>
        <begin position="225"/>
        <end position="227"/>
    </location>
</feature>
<feature type="helix" evidence="4">
    <location>
        <begin position="230"/>
        <end position="233"/>
    </location>
</feature>
<feature type="helix" evidence="4">
    <location>
        <begin position="235"/>
        <end position="238"/>
    </location>
</feature>
<feature type="strand" evidence="4">
    <location>
        <begin position="245"/>
        <end position="249"/>
    </location>
</feature>
<feature type="helix" evidence="4">
    <location>
        <begin position="255"/>
        <end position="268"/>
    </location>
</feature>
<feature type="strand" evidence="4">
    <location>
        <begin position="272"/>
        <end position="276"/>
    </location>
</feature>
<feature type="helix" evidence="4">
    <location>
        <begin position="277"/>
        <end position="279"/>
    </location>
</feature>
<feature type="helix" evidence="4">
    <location>
        <begin position="287"/>
        <end position="312"/>
    </location>
</feature>
<feature type="turn" evidence="4">
    <location>
        <begin position="323"/>
        <end position="325"/>
    </location>
</feature>
<dbReference type="EC" id="3.5.-.-"/>
<dbReference type="EMBL" id="AL009126">
    <property type="protein sequence ID" value="CAB15251.1"/>
    <property type="molecule type" value="Genomic_DNA"/>
</dbReference>
<dbReference type="PIR" id="G70018">
    <property type="entry name" value="G70018"/>
</dbReference>
<dbReference type="RefSeq" id="NP_391141.1">
    <property type="nucleotide sequence ID" value="NC_000964.3"/>
</dbReference>
<dbReference type="RefSeq" id="WP_003243688.1">
    <property type="nucleotide sequence ID" value="NZ_OZ025638.1"/>
</dbReference>
<dbReference type="PDB" id="3EUA">
    <property type="method" value="X-ray"/>
    <property type="resolution" value="1.90 A"/>
    <property type="chains" value="A/B/C/D/E/F/G/H=1-328"/>
</dbReference>
<dbReference type="PDBsum" id="3EUA"/>
<dbReference type="SMR" id="O32157"/>
<dbReference type="FunCoup" id="O32157">
    <property type="interactions" value="54"/>
</dbReference>
<dbReference type="STRING" id="224308.BSU32610"/>
<dbReference type="PaxDb" id="224308-BSU32610"/>
<dbReference type="EnsemblBacteria" id="CAB15251">
    <property type="protein sequence ID" value="CAB15251"/>
    <property type="gene ID" value="BSU_32610"/>
</dbReference>
<dbReference type="GeneID" id="936701"/>
<dbReference type="KEGG" id="bsu:BSU32610"/>
<dbReference type="PATRIC" id="fig|224308.179.peg.3531"/>
<dbReference type="eggNOG" id="COG2222">
    <property type="taxonomic scope" value="Bacteria"/>
</dbReference>
<dbReference type="InParanoid" id="O32157"/>
<dbReference type="OrthoDB" id="9782098at2"/>
<dbReference type="PhylomeDB" id="O32157"/>
<dbReference type="BioCyc" id="BSUB:BSU32610-MONOMER"/>
<dbReference type="SABIO-RK" id="O32157"/>
<dbReference type="EvolutionaryTrace" id="O32157"/>
<dbReference type="Proteomes" id="UP000001570">
    <property type="component" value="Chromosome"/>
</dbReference>
<dbReference type="GO" id="GO:0097367">
    <property type="term" value="F:carbohydrate derivative binding"/>
    <property type="evidence" value="ECO:0007669"/>
    <property type="project" value="InterPro"/>
</dbReference>
<dbReference type="GO" id="GO:0004360">
    <property type="term" value="F:glutamine-fructose-6-phosphate transaminase (isomerizing) activity"/>
    <property type="evidence" value="ECO:0000318"/>
    <property type="project" value="GO_Central"/>
</dbReference>
<dbReference type="GO" id="GO:0016787">
    <property type="term" value="F:hydrolase activity"/>
    <property type="evidence" value="ECO:0007669"/>
    <property type="project" value="UniProtKB-KW"/>
</dbReference>
<dbReference type="GO" id="GO:0006002">
    <property type="term" value="P:fructose 6-phosphate metabolic process"/>
    <property type="evidence" value="ECO:0000318"/>
    <property type="project" value="GO_Central"/>
</dbReference>
<dbReference type="GO" id="GO:0006487">
    <property type="term" value="P:protein N-linked glycosylation"/>
    <property type="evidence" value="ECO:0000318"/>
    <property type="project" value="GO_Central"/>
</dbReference>
<dbReference type="GO" id="GO:0006047">
    <property type="term" value="P:UDP-N-acetylglucosamine metabolic process"/>
    <property type="evidence" value="ECO:0000318"/>
    <property type="project" value="GO_Central"/>
</dbReference>
<dbReference type="CDD" id="cd05710">
    <property type="entry name" value="SIS_1"/>
    <property type="match status" value="1"/>
</dbReference>
<dbReference type="CDD" id="cd05009">
    <property type="entry name" value="SIS_GlmS_GlmD_2"/>
    <property type="match status" value="1"/>
</dbReference>
<dbReference type="Gene3D" id="1.10.10.2240">
    <property type="match status" value="1"/>
</dbReference>
<dbReference type="Gene3D" id="3.40.50.12570">
    <property type="match status" value="1"/>
</dbReference>
<dbReference type="Gene3D" id="3.40.50.10490">
    <property type="entry name" value="Glucose-6-phosphate isomerase like protein, domain 1"/>
    <property type="match status" value="1"/>
</dbReference>
<dbReference type="InterPro" id="IPR035488">
    <property type="entry name" value="FrlB_SIS"/>
</dbReference>
<dbReference type="InterPro" id="IPR024713">
    <property type="entry name" value="Fructosamine_deglycase_FrlB"/>
</dbReference>
<dbReference type="InterPro" id="IPR035490">
    <property type="entry name" value="GlmS/FrlB_SIS"/>
</dbReference>
<dbReference type="InterPro" id="IPR001347">
    <property type="entry name" value="SIS_dom"/>
</dbReference>
<dbReference type="InterPro" id="IPR046348">
    <property type="entry name" value="SIS_dom_sf"/>
</dbReference>
<dbReference type="PANTHER" id="PTHR10937:SF14">
    <property type="entry name" value="FRUCTOSELYSINE 6-PHOSPHATE DEGLYCASE"/>
    <property type="match status" value="1"/>
</dbReference>
<dbReference type="PANTHER" id="PTHR10937">
    <property type="entry name" value="GLUCOSAMINE--FRUCTOSE-6-PHOSPHATE AMINOTRANSFERASE, ISOMERIZING"/>
    <property type="match status" value="1"/>
</dbReference>
<dbReference type="Pfam" id="PF01380">
    <property type="entry name" value="SIS"/>
    <property type="match status" value="1"/>
</dbReference>
<dbReference type="PIRSF" id="PIRSF009290">
    <property type="entry name" value="FrlB"/>
    <property type="match status" value="1"/>
</dbReference>
<dbReference type="SUPFAM" id="SSF53697">
    <property type="entry name" value="SIS domain"/>
    <property type="match status" value="1"/>
</dbReference>
<dbReference type="PROSITE" id="PS51464">
    <property type="entry name" value="SIS"/>
    <property type="match status" value="2"/>
</dbReference>